<evidence type="ECO:0000255" key="1">
    <source>
        <dbReference type="HAMAP-Rule" id="MF_03191"/>
    </source>
</evidence>
<sequence>MALRSAAGRLASSSRRRLLSPPTSIHTAFLHSHATSFGYKQVAEEDKSKLVGNVFSSVASSYDLMNDLMSVGLHRLWKDRLISKLNPFPGMKHLDVAGGTGDVAFRALERINSVSHRAMQGTLTDIEEETQIYVCDINPNMLNVGKKRASERGYKEGHCLSWIQGDAEALSFEDGSMDGYTIAFGIRNVTHIEKALSEAYRVLKRGGRFLCLELSHVDVPLFKEIYDVYSFSVIPAVGELVAGDRQSYQYLVESIRRFPNQEKFAQMIQEAGFERVEYENLVGGVVAIHSGLKL</sequence>
<gene>
    <name evidence="1" type="primary">COQ5</name>
    <name type="ordered locus">Os01g0976600</name>
    <name type="ordered locus">LOC_Os01g74520</name>
    <name type="ORF">OsJ_04965</name>
    <name type="ORF">P0020E09.9</name>
</gene>
<keyword id="KW-0472">Membrane</keyword>
<keyword id="KW-0489">Methyltransferase</keyword>
<keyword id="KW-0496">Mitochondrion</keyword>
<keyword id="KW-0999">Mitochondrion inner membrane</keyword>
<keyword id="KW-1185">Reference proteome</keyword>
<keyword id="KW-0949">S-adenosyl-L-methionine</keyword>
<keyword id="KW-0808">Transferase</keyword>
<keyword id="KW-0809">Transit peptide</keyword>
<keyword id="KW-0831">Ubiquinone biosynthesis</keyword>
<proteinExistence type="evidence at transcript level"/>
<name>COQ5_ORYSJ</name>
<organism>
    <name type="scientific">Oryza sativa subsp. japonica</name>
    <name type="common">Rice</name>
    <dbReference type="NCBI Taxonomy" id="39947"/>
    <lineage>
        <taxon>Eukaryota</taxon>
        <taxon>Viridiplantae</taxon>
        <taxon>Streptophyta</taxon>
        <taxon>Embryophyta</taxon>
        <taxon>Tracheophyta</taxon>
        <taxon>Spermatophyta</taxon>
        <taxon>Magnoliopsida</taxon>
        <taxon>Liliopsida</taxon>
        <taxon>Poales</taxon>
        <taxon>Poaceae</taxon>
        <taxon>BOP clade</taxon>
        <taxon>Oryzoideae</taxon>
        <taxon>Oryzeae</taxon>
        <taxon>Oryzinae</taxon>
        <taxon>Oryza</taxon>
        <taxon>Oryza sativa</taxon>
    </lineage>
</organism>
<reference key="1">
    <citation type="journal article" date="2002" name="Nature">
        <title>The genome sequence and structure of rice chromosome 1.</title>
        <authorList>
            <person name="Sasaki T."/>
            <person name="Matsumoto T."/>
            <person name="Yamamoto K."/>
            <person name="Sakata K."/>
            <person name="Baba T."/>
            <person name="Katayose Y."/>
            <person name="Wu J."/>
            <person name="Niimura Y."/>
            <person name="Cheng Z."/>
            <person name="Nagamura Y."/>
            <person name="Antonio B.A."/>
            <person name="Kanamori H."/>
            <person name="Hosokawa S."/>
            <person name="Masukawa M."/>
            <person name="Arikawa K."/>
            <person name="Chiden Y."/>
            <person name="Hayashi M."/>
            <person name="Okamoto M."/>
            <person name="Ando T."/>
            <person name="Aoki H."/>
            <person name="Arita K."/>
            <person name="Hamada M."/>
            <person name="Harada C."/>
            <person name="Hijishita S."/>
            <person name="Honda M."/>
            <person name="Ichikawa Y."/>
            <person name="Idonuma A."/>
            <person name="Iijima M."/>
            <person name="Ikeda M."/>
            <person name="Ikeno M."/>
            <person name="Ito S."/>
            <person name="Ito T."/>
            <person name="Ito Y."/>
            <person name="Ito Y."/>
            <person name="Iwabuchi A."/>
            <person name="Kamiya K."/>
            <person name="Karasawa W."/>
            <person name="Katagiri S."/>
            <person name="Kikuta A."/>
            <person name="Kobayashi N."/>
            <person name="Kono I."/>
            <person name="Machita K."/>
            <person name="Maehara T."/>
            <person name="Mizuno H."/>
            <person name="Mizubayashi T."/>
            <person name="Mukai Y."/>
            <person name="Nagasaki H."/>
            <person name="Nakashima M."/>
            <person name="Nakama Y."/>
            <person name="Nakamichi Y."/>
            <person name="Nakamura M."/>
            <person name="Namiki N."/>
            <person name="Negishi M."/>
            <person name="Ohta I."/>
            <person name="Ono N."/>
            <person name="Saji S."/>
            <person name="Sakai K."/>
            <person name="Shibata M."/>
            <person name="Shimokawa T."/>
            <person name="Shomura A."/>
            <person name="Song J."/>
            <person name="Takazaki Y."/>
            <person name="Terasawa K."/>
            <person name="Tsuji K."/>
            <person name="Waki K."/>
            <person name="Yamagata H."/>
            <person name="Yamane H."/>
            <person name="Yoshiki S."/>
            <person name="Yoshihara R."/>
            <person name="Yukawa K."/>
            <person name="Zhong H."/>
            <person name="Iwama H."/>
            <person name="Endo T."/>
            <person name="Ito H."/>
            <person name="Hahn J.H."/>
            <person name="Kim H.-I."/>
            <person name="Eun M.-Y."/>
            <person name="Yano M."/>
            <person name="Jiang J."/>
            <person name="Gojobori T."/>
        </authorList>
    </citation>
    <scope>NUCLEOTIDE SEQUENCE [LARGE SCALE GENOMIC DNA]</scope>
    <source>
        <strain>cv. Nipponbare</strain>
    </source>
</reference>
<reference key="2">
    <citation type="journal article" date="2005" name="Nature">
        <title>The map-based sequence of the rice genome.</title>
        <authorList>
            <consortium name="International rice genome sequencing project (IRGSP)"/>
        </authorList>
    </citation>
    <scope>NUCLEOTIDE SEQUENCE [LARGE SCALE GENOMIC DNA]</scope>
    <source>
        <strain>cv. Nipponbare</strain>
    </source>
</reference>
<reference key="3">
    <citation type="journal article" date="2008" name="Nucleic Acids Res.">
        <title>The rice annotation project database (RAP-DB): 2008 update.</title>
        <authorList>
            <consortium name="The rice annotation project (RAP)"/>
        </authorList>
    </citation>
    <scope>GENOME REANNOTATION</scope>
    <source>
        <strain>cv. Nipponbare</strain>
    </source>
</reference>
<reference key="4">
    <citation type="journal article" date="2013" name="Rice">
        <title>Improvement of the Oryza sativa Nipponbare reference genome using next generation sequence and optical map data.</title>
        <authorList>
            <person name="Kawahara Y."/>
            <person name="de la Bastide M."/>
            <person name="Hamilton J.P."/>
            <person name="Kanamori H."/>
            <person name="McCombie W.R."/>
            <person name="Ouyang S."/>
            <person name="Schwartz D.C."/>
            <person name="Tanaka T."/>
            <person name="Wu J."/>
            <person name="Zhou S."/>
            <person name="Childs K.L."/>
            <person name="Davidson R.M."/>
            <person name="Lin H."/>
            <person name="Quesada-Ocampo L."/>
            <person name="Vaillancourt B."/>
            <person name="Sakai H."/>
            <person name="Lee S.S."/>
            <person name="Kim J."/>
            <person name="Numa H."/>
            <person name="Itoh T."/>
            <person name="Buell C.R."/>
            <person name="Matsumoto T."/>
        </authorList>
    </citation>
    <scope>GENOME REANNOTATION</scope>
    <source>
        <strain>cv. Nipponbare</strain>
    </source>
</reference>
<reference key="5">
    <citation type="journal article" date="2005" name="PLoS Biol.">
        <title>The genomes of Oryza sativa: a history of duplications.</title>
        <authorList>
            <person name="Yu J."/>
            <person name="Wang J."/>
            <person name="Lin W."/>
            <person name="Li S."/>
            <person name="Li H."/>
            <person name="Zhou J."/>
            <person name="Ni P."/>
            <person name="Dong W."/>
            <person name="Hu S."/>
            <person name="Zeng C."/>
            <person name="Zhang J."/>
            <person name="Zhang Y."/>
            <person name="Li R."/>
            <person name="Xu Z."/>
            <person name="Li S."/>
            <person name="Li X."/>
            <person name="Zheng H."/>
            <person name="Cong L."/>
            <person name="Lin L."/>
            <person name="Yin J."/>
            <person name="Geng J."/>
            <person name="Li G."/>
            <person name="Shi J."/>
            <person name="Liu J."/>
            <person name="Lv H."/>
            <person name="Li J."/>
            <person name="Wang J."/>
            <person name="Deng Y."/>
            <person name="Ran L."/>
            <person name="Shi X."/>
            <person name="Wang X."/>
            <person name="Wu Q."/>
            <person name="Li C."/>
            <person name="Ren X."/>
            <person name="Wang J."/>
            <person name="Wang X."/>
            <person name="Li D."/>
            <person name="Liu D."/>
            <person name="Zhang X."/>
            <person name="Ji Z."/>
            <person name="Zhao W."/>
            <person name="Sun Y."/>
            <person name="Zhang Z."/>
            <person name="Bao J."/>
            <person name="Han Y."/>
            <person name="Dong L."/>
            <person name="Ji J."/>
            <person name="Chen P."/>
            <person name="Wu S."/>
            <person name="Liu J."/>
            <person name="Xiao Y."/>
            <person name="Bu D."/>
            <person name="Tan J."/>
            <person name="Yang L."/>
            <person name="Ye C."/>
            <person name="Zhang J."/>
            <person name="Xu J."/>
            <person name="Zhou Y."/>
            <person name="Yu Y."/>
            <person name="Zhang B."/>
            <person name="Zhuang S."/>
            <person name="Wei H."/>
            <person name="Liu B."/>
            <person name="Lei M."/>
            <person name="Yu H."/>
            <person name="Li Y."/>
            <person name="Xu H."/>
            <person name="Wei S."/>
            <person name="He X."/>
            <person name="Fang L."/>
            <person name="Zhang Z."/>
            <person name="Zhang Y."/>
            <person name="Huang X."/>
            <person name="Su Z."/>
            <person name="Tong W."/>
            <person name="Li J."/>
            <person name="Tong Z."/>
            <person name="Li S."/>
            <person name="Ye J."/>
            <person name="Wang L."/>
            <person name="Fang L."/>
            <person name="Lei T."/>
            <person name="Chen C.-S."/>
            <person name="Chen H.-C."/>
            <person name="Xu Z."/>
            <person name="Li H."/>
            <person name="Huang H."/>
            <person name="Zhang F."/>
            <person name="Xu H."/>
            <person name="Li N."/>
            <person name="Zhao C."/>
            <person name="Li S."/>
            <person name="Dong L."/>
            <person name="Huang Y."/>
            <person name="Li L."/>
            <person name="Xi Y."/>
            <person name="Qi Q."/>
            <person name="Li W."/>
            <person name="Zhang B."/>
            <person name="Hu W."/>
            <person name="Zhang Y."/>
            <person name="Tian X."/>
            <person name="Jiao Y."/>
            <person name="Liang X."/>
            <person name="Jin J."/>
            <person name="Gao L."/>
            <person name="Zheng W."/>
            <person name="Hao B."/>
            <person name="Liu S.-M."/>
            <person name="Wang W."/>
            <person name="Yuan L."/>
            <person name="Cao M."/>
            <person name="McDermott J."/>
            <person name="Samudrala R."/>
            <person name="Wang J."/>
            <person name="Wong G.K.-S."/>
            <person name="Yang H."/>
        </authorList>
    </citation>
    <scope>NUCLEOTIDE SEQUENCE [LARGE SCALE GENOMIC DNA]</scope>
    <source>
        <strain>cv. Nipponbare</strain>
    </source>
</reference>
<reference key="6">
    <citation type="journal article" date="2003" name="Science">
        <title>Collection, mapping, and annotation of over 28,000 cDNA clones from japonica rice.</title>
        <authorList>
            <consortium name="The rice full-length cDNA consortium"/>
        </authorList>
    </citation>
    <scope>NUCLEOTIDE SEQUENCE [LARGE SCALE MRNA]</scope>
    <source>
        <strain>cv. Nipponbare</strain>
    </source>
</reference>
<protein>
    <recommendedName>
        <fullName evidence="1">2-methoxy-6-polyprenyl-1,4-benzoquinol methylase, mitochondrial</fullName>
        <ecNumber evidence="1">2.1.1.201</ecNumber>
    </recommendedName>
    <alternativeName>
        <fullName evidence="1">Ubiquinone biosynthesis methyltransferase COQ5</fullName>
    </alternativeName>
</protein>
<dbReference type="EC" id="2.1.1.201" evidence="1"/>
<dbReference type="EMBL" id="AP003228">
    <property type="protein sequence ID" value="BAD87036.1"/>
    <property type="molecule type" value="Genomic_DNA"/>
</dbReference>
<dbReference type="EMBL" id="AP008207">
    <property type="protein sequence ID" value="BAF07482.1"/>
    <property type="molecule type" value="Genomic_DNA"/>
</dbReference>
<dbReference type="EMBL" id="AP014957">
    <property type="protein sequence ID" value="BAS76474.1"/>
    <property type="molecule type" value="Genomic_DNA"/>
</dbReference>
<dbReference type="EMBL" id="CM000138">
    <property type="protein sequence ID" value="EEE56107.1"/>
    <property type="molecule type" value="Genomic_DNA"/>
</dbReference>
<dbReference type="EMBL" id="AK072971">
    <property type="protein sequence ID" value="BAG93224.1"/>
    <property type="molecule type" value="mRNA"/>
</dbReference>
<dbReference type="RefSeq" id="XP_015641142.1">
    <property type="nucleotide sequence ID" value="XM_015785656.1"/>
</dbReference>
<dbReference type="SMR" id="Q5JNC0"/>
<dbReference type="FunCoup" id="Q5JNC0">
    <property type="interactions" value="2897"/>
</dbReference>
<dbReference type="STRING" id="39947.Q5JNC0"/>
<dbReference type="PaxDb" id="39947-Q5JNC0"/>
<dbReference type="EnsemblPlants" id="Os01t0976600-01">
    <property type="protein sequence ID" value="Os01t0976600-01"/>
    <property type="gene ID" value="Os01g0976600"/>
</dbReference>
<dbReference type="Gramene" id="Os01t0976600-01">
    <property type="protein sequence ID" value="Os01t0976600-01"/>
    <property type="gene ID" value="Os01g0976600"/>
</dbReference>
<dbReference type="KEGG" id="dosa:Os01g0976600"/>
<dbReference type="eggNOG" id="KOG1540">
    <property type="taxonomic scope" value="Eukaryota"/>
</dbReference>
<dbReference type="HOGENOM" id="CLU_037990_0_1_1"/>
<dbReference type="InParanoid" id="Q5JNC0"/>
<dbReference type="OMA" id="MNDVMSM"/>
<dbReference type="OrthoDB" id="6329284at2759"/>
<dbReference type="UniPathway" id="UPA00232"/>
<dbReference type="Proteomes" id="UP000000763">
    <property type="component" value="Chromosome 1"/>
</dbReference>
<dbReference type="Proteomes" id="UP000007752">
    <property type="component" value="Chromosome 1"/>
</dbReference>
<dbReference type="Proteomes" id="UP000059680">
    <property type="component" value="Chromosome 1"/>
</dbReference>
<dbReference type="GO" id="GO:0031314">
    <property type="term" value="C:extrinsic component of mitochondrial inner membrane"/>
    <property type="evidence" value="ECO:0007669"/>
    <property type="project" value="UniProtKB-UniRule"/>
</dbReference>
<dbReference type="GO" id="GO:0008425">
    <property type="term" value="F:2-methoxy-6-polyprenyl-1,4-benzoquinol methyltransferase activity"/>
    <property type="evidence" value="ECO:0000318"/>
    <property type="project" value="GO_Central"/>
</dbReference>
<dbReference type="GO" id="GO:0032259">
    <property type="term" value="P:methylation"/>
    <property type="evidence" value="ECO:0007669"/>
    <property type="project" value="UniProtKB-KW"/>
</dbReference>
<dbReference type="GO" id="GO:0006744">
    <property type="term" value="P:ubiquinone biosynthetic process"/>
    <property type="evidence" value="ECO:0000318"/>
    <property type="project" value="GO_Central"/>
</dbReference>
<dbReference type="CDD" id="cd02440">
    <property type="entry name" value="AdoMet_MTases"/>
    <property type="match status" value="1"/>
</dbReference>
<dbReference type="FunFam" id="3.40.50.150:FF:000064">
    <property type="entry name" value="2-methoxy-6-polyprenyl-1,4-benzoquinol methylase, mitochondrial"/>
    <property type="match status" value="1"/>
</dbReference>
<dbReference type="Gene3D" id="3.40.50.150">
    <property type="entry name" value="Vaccinia Virus protein VP39"/>
    <property type="match status" value="1"/>
</dbReference>
<dbReference type="HAMAP" id="MF_01813">
    <property type="entry name" value="MenG_UbiE_methyltr"/>
    <property type="match status" value="1"/>
</dbReference>
<dbReference type="InterPro" id="IPR029063">
    <property type="entry name" value="SAM-dependent_MTases_sf"/>
</dbReference>
<dbReference type="InterPro" id="IPR004033">
    <property type="entry name" value="UbiE/COQ5_MeTrFase"/>
</dbReference>
<dbReference type="InterPro" id="IPR023576">
    <property type="entry name" value="UbiE/COQ5_MeTrFase_CS"/>
</dbReference>
<dbReference type="NCBIfam" id="TIGR01934">
    <property type="entry name" value="MenG_MenH_UbiE"/>
    <property type="match status" value="1"/>
</dbReference>
<dbReference type="NCBIfam" id="NF001242">
    <property type="entry name" value="PRK00216.1-3"/>
    <property type="match status" value="1"/>
</dbReference>
<dbReference type="NCBIfam" id="NF001244">
    <property type="entry name" value="PRK00216.1-5"/>
    <property type="match status" value="1"/>
</dbReference>
<dbReference type="PANTHER" id="PTHR43591:SF24">
    <property type="entry name" value="2-METHOXY-6-POLYPRENYL-1,4-BENZOQUINOL METHYLASE, MITOCHONDRIAL"/>
    <property type="match status" value="1"/>
</dbReference>
<dbReference type="PANTHER" id="PTHR43591">
    <property type="entry name" value="METHYLTRANSFERASE"/>
    <property type="match status" value="1"/>
</dbReference>
<dbReference type="Pfam" id="PF01209">
    <property type="entry name" value="Ubie_methyltran"/>
    <property type="match status" value="1"/>
</dbReference>
<dbReference type="SUPFAM" id="SSF53335">
    <property type="entry name" value="S-adenosyl-L-methionine-dependent methyltransferases"/>
    <property type="match status" value="1"/>
</dbReference>
<dbReference type="PROSITE" id="PS51608">
    <property type="entry name" value="SAM_MT_UBIE"/>
    <property type="match status" value="1"/>
</dbReference>
<dbReference type="PROSITE" id="PS01183">
    <property type="entry name" value="UBIE_1"/>
    <property type="match status" value="1"/>
</dbReference>
<dbReference type="PROSITE" id="PS01184">
    <property type="entry name" value="UBIE_2"/>
    <property type="match status" value="1"/>
</dbReference>
<accession>Q5JNC0</accession>
<accession>A0A0P0VDF7</accession>
<comment type="function">
    <text evidence="1">Methyltransferase required for the conversion of 2-polyprenyl-6-methoxy-1,4-benzoquinol (DDMQH2) to 2-polyprenyl-3-methyl-6-methoxy-1,4-benzoquinol (DMQH2).</text>
</comment>
<comment type="catalytic activity">
    <reaction evidence="1">
        <text>a 2-methoxy-6-(all-trans-polyprenyl)benzene-1,4-diol + S-adenosyl-L-methionine = a 5-methoxy-2-methyl-3-(all-trans-polyprenyl)benzene-1,4-diol + S-adenosyl-L-homocysteine + H(+)</text>
        <dbReference type="Rhea" id="RHEA:28286"/>
        <dbReference type="Rhea" id="RHEA-COMP:10858"/>
        <dbReference type="Rhea" id="RHEA-COMP:10859"/>
        <dbReference type="ChEBI" id="CHEBI:15378"/>
        <dbReference type="ChEBI" id="CHEBI:57856"/>
        <dbReference type="ChEBI" id="CHEBI:59789"/>
        <dbReference type="ChEBI" id="CHEBI:84166"/>
        <dbReference type="ChEBI" id="CHEBI:84167"/>
        <dbReference type="EC" id="2.1.1.201"/>
    </reaction>
</comment>
<comment type="pathway">
    <text evidence="1">Cofactor biosynthesis; ubiquinone biosynthesis.</text>
</comment>
<comment type="subunit">
    <text evidence="1">Component of a multi-subunit COQ enzyme complex.</text>
</comment>
<comment type="subcellular location">
    <subcellularLocation>
        <location evidence="1">Mitochondrion inner membrane</location>
        <topology evidence="1">Peripheral membrane protein</topology>
        <orientation evidence="1">Matrix side</orientation>
    </subcellularLocation>
</comment>
<comment type="similarity">
    <text evidence="1">Belongs to the class I-like SAM-binding methyltransferase superfamily. MenG/UbiE family.</text>
</comment>
<feature type="transit peptide" description="Mitochondrion" evidence="1">
    <location>
        <begin position="1"/>
        <end position="10"/>
    </location>
</feature>
<feature type="chain" id="PRO_0000375864" description="2-methoxy-6-polyprenyl-1,4-benzoquinol methylase, mitochondrial">
    <location>
        <begin position="11"/>
        <end position="294"/>
    </location>
</feature>
<feature type="binding site" evidence="1">
    <location>
        <position position="100"/>
    </location>
    <ligand>
        <name>S-adenosyl-L-methionine</name>
        <dbReference type="ChEBI" id="CHEBI:59789"/>
    </ligand>
</feature>
<feature type="binding site" evidence="1">
    <location>
        <position position="136"/>
    </location>
    <ligand>
        <name>S-adenosyl-L-methionine</name>
        <dbReference type="ChEBI" id="CHEBI:59789"/>
    </ligand>
</feature>
<feature type="binding site" evidence="1">
    <location>
        <begin position="166"/>
        <end position="167"/>
    </location>
    <ligand>
        <name>S-adenosyl-L-methionine</name>
        <dbReference type="ChEBI" id="CHEBI:59789"/>
    </ligand>
</feature>